<accession>Q8XAK8</accession>
<accession>Q7AAN3</accession>
<reference key="1">
    <citation type="journal article" date="2001" name="Nature">
        <title>Genome sequence of enterohaemorrhagic Escherichia coli O157:H7.</title>
        <authorList>
            <person name="Perna N.T."/>
            <person name="Plunkett G. III"/>
            <person name="Burland V."/>
            <person name="Mau B."/>
            <person name="Glasner J.D."/>
            <person name="Rose D.J."/>
            <person name="Mayhew G.F."/>
            <person name="Evans P.S."/>
            <person name="Gregor J."/>
            <person name="Kirkpatrick H.A."/>
            <person name="Posfai G."/>
            <person name="Hackett J."/>
            <person name="Klink S."/>
            <person name="Boutin A."/>
            <person name="Shao Y."/>
            <person name="Miller L."/>
            <person name="Grotbeck E.J."/>
            <person name="Davis N.W."/>
            <person name="Lim A."/>
            <person name="Dimalanta E.T."/>
            <person name="Potamousis K."/>
            <person name="Apodaca J."/>
            <person name="Anantharaman T.S."/>
            <person name="Lin J."/>
            <person name="Yen G."/>
            <person name="Schwartz D.C."/>
            <person name="Welch R.A."/>
            <person name="Blattner F.R."/>
        </authorList>
    </citation>
    <scope>NUCLEOTIDE SEQUENCE [LARGE SCALE GENOMIC DNA]</scope>
    <source>
        <strain>O157:H7 / EDL933 / ATCC 700927 / EHEC</strain>
    </source>
</reference>
<reference key="2">
    <citation type="journal article" date="2001" name="DNA Res.">
        <title>Complete genome sequence of enterohemorrhagic Escherichia coli O157:H7 and genomic comparison with a laboratory strain K-12.</title>
        <authorList>
            <person name="Hayashi T."/>
            <person name="Makino K."/>
            <person name="Ohnishi M."/>
            <person name="Kurokawa K."/>
            <person name="Ishii K."/>
            <person name="Yokoyama K."/>
            <person name="Han C.-G."/>
            <person name="Ohtsubo E."/>
            <person name="Nakayama K."/>
            <person name="Murata T."/>
            <person name="Tanaka M."/>
            <person name="Tobe T."/>
            <person name="Iida T."/>
            <person name="Takami H."/>
            <person name="Honda T."/>
            <person name="Sasakawa C."/>
            <person name="Ogasawara N."/>
            <person name="Yasunaga T."/>
            <person name="Kuhara S."/>
            <person name="Shiba T."/>
            <person name="Hattori M."/>
            <person name="Shinagawa H."/>
        </authorList>
    </citation>
    <scope>NUCLEOTIDE SEQUENCE [LARGE SCALE GENOMIC DNA]</scope>
    <source>
        <strain>O157:H7 / Sakai / RIMD 0509952 / EHEC</strain>
    </source>
</reference>
<sequence>MSHLDNGFRSLTLQRFPATDDVNPLQAWEAADEYLLQQLDDTEIRGPVLILNDAFGALSCALAEHKPYSIGDSYISELATRENLRLNGIDESSVKFLDSTADYPQQPGVVLIKVPKTLALLEQQLRALRKVVTPQTRIIAGAKARDIHTSTLELFEKVLGPTTTTLAWKKARLINCTFNEPPLADAPQTVSWKLEGTDWTIHNHANVFSRTGLDIGARFFMQHLPENLEGEIVDLGCGNGVIGLTLLDKNPQAKVVFVDESPMAVASSRLNVETNMPEALDRCEFMINNALSGVEPFRFNAVLCNPPFHQQHALTDNVAWEMFHHARRCLKINGELYIVANRHLDYFHKLKKIFGNCTTIATNNKFVVLKAVKLGRRR</sequence>
<comment type="function">
    <text evidence="1">Specifically methylates the guanine in position 1835 (m2G1835) of 23S rRNA.</text>
</comment>
<comment type="catalytic activity">
    <reaction evidence="1">
        <text>guanosine(1835) in 23S rRNA + S-adenosyl-L-methionine = N(2)-methylguanosine(1835) in 23S rRNA + S-adenosyl-L-homocysteine + H(+)</text>
        <dbReference type="Rhea" id="RHEA:42744"/>
        <dbReference type="Rhea" id="RHEA-COMP:10217"/>
        <dbReference type="Rhea" id="RHEA-COMP:10218"/>
        <dbReference type="ChEBI" id="CHEBI:15378"/>
        <dbReference type="ChEBI" id="CHEBI:57856"/>
        <dbReference type="ChEBI" id="CHEBI:59789"/>
        <dbReference type="ChEBI" id="CHEBI:74269"/>
        <dbReference type="ChEBI" id="CHEBI:74481"/>
        <dbReference type="EC" id="2.1.1.174"/>
    </reaction>
</comment>
<comment type="subcellular location">
    <subcellularLocation>
        <location evidence="1">Cytoplasm</location>
    </subcellularLocation>
</comment>
<comment type="similarity">
    <text evidence="1">Belongs to the methyltransferase superfamily. RlmG family.</text>
</comment>
<name>RLMG_ECO57</name>
<evidence type="ECO:0000255" key="1">
    <source>
        <dbReference type="HAMAP-Rule" id="MF_01859"/>
    </source>
</evidence>
<gene>
    <name evidence="1" type="primary">rlmG</name>
    <name type="ordered locus">Z4437</name>
    <name type="ordered locus">ECs3966</name>
</gene>
<proteinExistence type="inferred from homology"/>
<keyword id="KW-0963">Cytoplasm</keyword>
<keyword id="KW-0489">Methyltransferase</keyword>
<keyword id="KW-1185">Reference proteome</keyword>
<keyword id="KW-0698">rRNA processing</keyword>
<keyword id="KW-0949">S-adenosyl-L-methionine</keyword>
<keyword id="KW-0808">Transferase</keyword>
<protein>
    <recommendedName>
        <fullName evidence="1">Ribosomal RNA large subunit methyltransferase G</fullName>
        <ecNumber evidence="1">2.1.1.174</ecNumber>
    </recommendedName>
    <alternativeName>
        <fullName evidence="1">23S rRNA m2G1835 methyltransferase</fullName>
    </alternativeName>
    <alternativeName>
        <fullName evidence="1">rRNA (guanine-N(2)-)-methyltransferase RlmG</fullName>
    </alternativeName>
</protein>
<organism>
    <name type="scientific">Escherichia coli O157:H7</name>
    <dbReference type="NCBI Taxonomy" id="83334"/>
    <lineage>
        <taxon>Bacteria</taxon>
        <taxon>Pseudomonadati</taxon>
        <taxon>Pseudomonadota</taxon>
        <taxon>Gammaproteobacteria</taxon>
        <taxon>Enterobacterales</taxon>
        <taxon>Enterobacteriaceae</taxon>
        <taxon>Escherichia</taxon>
    </lineage>
</organism>
<feature type="chain" id="PRO_0000366460" description="Ribosomal RNA large subunit methyltransferase G">
    <location>
        <begin position="1"/>
        <end position="378"/>
    </location>
</feature>
<dbReference type="EC" id="2.1.1.174" evidence="1"/>
<dbReference type="EMBL" id="AE005174">
    <property type="protein sequence ID" value="AAG58217.1"/>
    <property type="molecule type" value="Genomic_DNA"/>
</dbReference>
<dbReference type="EMBL" id="BA000007">
    <property type="protein sequence ID" value="BAB37389.2"/>
    <property type="molecule type" value="Genomic_DNA"/>
</dbReference>
<dbReference type="PIR" id="E85969">
    <property type="entry name" value="E85969"/>
</dbReference>
<dbReference type="PIR" id="F91124">
    <property type="entry name" value="F91124"/>
</dbReference>
<dbReference type="RefSeq" id="NP_311993.2">
    <property type="nucleotide sequence ID" value="NC_002695.1"/>
</dbReference>
<dbReference type="RefSeq" id="WP_000018678.1">
    <property type="nucleotide sequence ID" value="NZ_VOAI01000009.1"/>
</dbReference>
<dbReference type="SMR" id="Q8XAK8"/>
<dbReference type="STRING" id="155864.Z4437"/>
<dbReference type="GeneID" id="916203"/>
<dbReference type="KEGG" id="ece:Z4437"/>
<dbReference type="KEGG" id="ecs:ECs_3966"/>
<dbReference type="PATRIC" id="fig|386585.9.peg.4140"/>
<dbReference type="eggNOG" id="COG2813">
    <property type="taxonomic scope" value="Bacteria"/>
</dbReference>
<dbReference type="HOGENOM" id="CLU_040288_4_0_6"/>
<dbReference type="OMA" id="NRHLGYH"/>
<dbReference type="Proteomes" id="UP000000558">
    <property type="component" value="Chromosome"/>
</dbReference>
<dbReference type="Proteomes" id="UP000002519">
    <property type="component" value="Chromosome"/>
</dbReference>
<dbReference type="GO" id="GO:0005737">
    <property type="term" value="C:cytoplasm"/>
    <property type="evidence" value="ECO:0007669"/>
    <property type="project" value="UniProtKB-SubCell"/>
</dbReference>
<dbReference type="GO" id="GO:0052916">
    <property type="term" value="F:23S rRNA (guanine(1835)-N(2))-methyltransferase activity"/>
    <property type="evidence" value="ECO:0007669"/>
    <property type="project" value="UniProtKB-EC"/>
</dbReference>
<dbReference type="GO" id="GO:0003676">
    <property type="term" value="F:nucleic acid binding"/>
    <property type="evidence" value="ECO:0007669"/>
    <property type="project" value="InterPro"/>
</dbReference>
<dbReference type="CDD" id="cd02440">
    <property type="entry name" value="AdoMet_MTases"/>
    <property type="match status" value="1"/>
</dbReference>
<dbReference type="FunFam" id="3.40.50.150:FF:000046">
    <property type="entry name" value="Ribosomal RNA large subunit methyltransferase G"/>
    <property type="match status" value="1"/>
</dbReference>
<dbReference type="FunFam" id="3.40.50.150:FF:000047">
    <property type="entry name" value="Ribosomal RNA large subunit methyltransferase G"/>
    <property type="match status" value="1"/>
</dbReference>
<dbReference type="Gene3D" id="3.40.50.150">
    <property type="entry name" value="Vaccinia Virus protein VP39"/>
    <property type="match status" value="2"/>
</dbReference>
<dbReference type="HAMAP" id="MF_01859">
    <property type="entry name" value="23SrRNA_methyltr_G"/>
    <property type="match status" value="1"/>
</dbReference>
<dbReference type="InterPro" id="IPR002052">
    <property type="entry name" value="DNA_methylase_N6_adenine_CS"/>
</dbReference>
<dbReference type="InterPro" id="IPR017237">
    <property type="entry name" value="rRNA_m2G-MeTrfase_RlmG"/>
</dbReference>
<dbReference type="InterPro" id="IPR046977">
    <property type="entry name" value="RsmC/RlmG"/>
</dbReference>
<dbReference type="InterPro" id="IPR029063">
    <property type="entry name" value="SAM-dependent_MTases_sf"/>
</dbReference>
<dbReference type="InterPro" id="IPR007848">
    <property type="entry name" value="Small_mtfrase_dom"/>
</dbReference>
<dbReference type="NCBIfam" id="NF011577">
    <property type="entry name" value="PRK15001.1"/>
    <property type="match status" value="1"/>
</dbReference>
<dbReference type="PANTHER" id="PTHR47816:SF5">
    <property type="entry name" value="RIBOSOMAL RNA LARGE SUBUNIT METHYLTRANSFERASE G"/>
    <property type="match status" value="1"/>
</dbReference>
<dbReference type="PANTHER" id="PTHR47816">
    <property type="entry name" value="RIBOSOMAL RNA SMALL SUBUNIT METHYLTRANSFERASE C"/>
    <property type="match status" value="1"/>
</dbReference>
<dbReference type="Pfam" id="PF05175">
    <property type="entry name" value="MTS"/>
    <property type="match status" value="1"/>
</dbReference>
<dbReference type="PIRSF" id="PIRSF037565">
    <property type="entry name" value="RRNA_m2G_Mtase_RsmD_prd"/>
    <property type="match status" value="1"/>
</dbReference>
<dbReference type="SUPFAM" id="SSF53335">
    <property type="entry name" value="S-adenosyl-L-methionine-dependent methyltransferases"/>
    <property type="match status" value="1"/>
</dbReference>